<proteinExistence type="inferred from homology"/>
<feature type="chain" id="PRO_1000016493" description="Protein NrdI">
    <location>
        <begin position="1"/>
        <end position="132"/>
    </location>
</feature>
<evidence type="ECO:0000255" key="1">
    <source>
        <dbReference type="HAMAP-Rule" id="MF_00128"/>
    </source>
</evidence>
<organism>
    <name type="scientific">Bartonella quintana (strain Toulouse)</name>
    <name type="common">Rochalimaea quintana</name>
    <dbReference type="NCBI Taxonomy" id="283165"/>
    <lineage>
        <taxon>Bacteria</taxon>
        <taxon>Pseudomonadati</taxon>
        <taxon>Pseudomonadota</taxon>
        <taxon>Alphaproteobacteria</taxon>
        <taxon>Hyphomicrobiales</taxon>
        <taxon>Bartonellaceae</taxon>
        <taxon>Bartonella</taxon>
    </lineage>
</organism>
<gene>
    <name evidence="1" type="primary">nrdI</name>
    <name type="ordered locus">BQ01810</name>
</gene>
<dbReference type="EMBL" id="BX897700">
    <property type="protein sequence ID" value="CAF25684.1"/>
    <property type="molecule type" value="Genomic_DNA"/>
</dbReference>
<dbReference type="RefSeq" id="WP_011178999.1">
    <property type="nucleotide sequence ID" value="NC_005955.1"/>
</dbReference>
<dbReference type="SMR" id="Q6G0R4"/>
<dbReference type="GeneID" id="56532567"/>
<dbReference type="KEGG" id="bqu:BQ01810"/>
<dbReference type="eggNOG" id="COG1780">
    <property type="taxonomic scope" value="Bacteria"/>
</dbReference>
<dbReference type="HOGENOM" id="CLU_114845_0_0_5"/>
<dbReference type="OrthoDB" id="350535at2"/>
<dbReference type="Proteomes" id="UP000000597">
    <property type="component" value="Chromosome"/>
</dbReference>
<dbReference type="GO" id="GO:0010181">
    <property type="term" value="F:FMN binding"/>
    <property type="evidence" value="ECO:0007669"/>
    <property type="project" value="InterPro"/>
</dbReference>
<dbReference type="GO" id="GO:0036211">
    <property type="term" value="P:protein modification process"/>
    <property type="evidence" value="ECO:0007669"/>
    <property type="project" value="InterPro"/>
</dbReference>
<dbReference type="Gene3D" id="3.40.50.360">
    <property type="match status" value="1"/>
</dbReference>
<dbReference type="HAMAP" id="MF_00128">
    <property type="entry name" value="NrdI"/>
    <property type="match status" value="1"/>
</dbReference>
<dbReference type="InterPro" id="IPR029039">
    <property type="entry name" value="Flavoprotein-like_sf"/>
</dbReference>
<dbReference type="InterPro" id="IPR020852">
    <property type="entry name" value="RNR_Ib_NrdI_bac"/>
</dbReference>
<dbReference type="InterPro" id="IPR004465">
    <property type="entry name" value="RNR_NrdI"/>
</dbReference>
<dbReference type="NCBIfam" id="TIGR00333">
    <property type="entry name" value="nrdI"/>
    <property type="match status" value="1"/>
</dbReference>
<dbReference type="PANTHER" id="PTHR37297">
    <property type="entry name" value="PROTEIN NRDI"/>
    <property type="match status" value="1"/>
</dbReference>
<dbReference type="PANTHER" id="PTHR37297:SF1">
    <property type="entry name" value="PROTEIN NRDI"/>
    <property type="match status" value="1"/>
</dbReference>
<dbReference type="Pfam" id="PF07972">
    <property type="entry name" value="Flavodoxin_NdrI"/>
    <property type="match status" value="1"/>
</dbReference>
<dbReference type="PIRSF" id="PIRSF005087">
    <property type="entry name" value="NrdI"/>
    <property type="match status" value="1"/>
</dbReference>
<dbReference type="SUPFAM" id="SSF52218">
    <property type="entry name" value="Flavoproteins"/>
    <property type="match status" value="1"/>
</dbReference>
<accession>Q6G0R4</accession>
<name>NRDI_BARQU</name>
<sequence>MGLIVYYSSATGNTEYFVSQLGQRLFKIDKKKPSVLVDEPYVLVVPTYADGEGRMAVPKVVIRFLNECENRKLIRGVIGGGNRNFGCYYNLASKIIAEKCFVPCLYRFELRGTNEDVICVKKGLERFWKQLV</sequence>
<protein>
    <recommendedName>
        <fullName evidence="1">Protein NrdI</fullName>
    </recommendedName>
</protein>
<comment type="function">
    <text evidence="1">Probably involved in ribonucleotide reductase function.</text>
</comment>
<comment type="similarity">
    <text evidence="1">Belongs to the NrdI family.</text>
</comment>
<reference key="1">
    <citation type="journal article" date="2004" name="Proc. Natl. Acad. Sci. U.S.A.">
        <title>The louse-borne human pathogen Bartonella quintana is a genomic derivative of the zoonotic agent Bartonella henselae.</title>
        <authorList>
            <person name="Alsmark U.C.M."/>
            <person name="Frank A.C."/>
            <person name="Karlberg E.O."/>
            <person name="Legault B.-A."/>
            <person name="Ardell D.H."/>
            <person name="Canbaeck B."/>
            <person name="Eriksson A.-S."/>
            <person name="Naeslund A.K."/>
            <person name="Handley S.A."/>
            <person name="Huvet M."/>
            <person name="La Scola B."/>
            <person name="Holmberg M."/>
            <person name="Andersson S.G.E."/>
        </authorList>
    </citation>
    <scope>NUCLEOTIDE SEQUENCE [LARGE SCALE GENOMIC DNA]</scope>
    <source>
        <strain>Toulouse</strain>
    </source>
</reference>